<sequence>MWKIRCVCPFEDDDGFTIQCESCEVWQHAVCVNIDANNVPEKYFCEQCQPRPIDADKAHKIQLARLQREEEQSRILSRSRSSNNKRRTSFGKNGASPTHSASPRQGNNTGANGALFSQSTNSSNSGSYRNSVTGATLPNAHAPHSQNRRRRSNHLNNPPEAPITEASNEYVYSFHLEYVPLESNTFSASALEYSKNLDLKNLDESEVLMDGCQVVPISSSKFCCSRFGLVSTCEIPPNTPIMEVKGRVCTQNEYKSDPKNQYNILGAPKPHVFFDSNSQLVVDSRVAGSKARFARKGCQSNSVVSSVYMNGSNSVPRFILYSTTHIAPETEIIGDWTLDISHPFRQFAPGMSRPSFNMEELELLSEVLSTFLSFNECASQDKKNCVFSRVTKYIKAARRASTANRVSVAKDRLSLTPSSTPSTPSPAESLPQPSNPTSVYAKSLKEFWLDKYRLSILQKWPAVKSLPTESVGIDVVMEPKLQPSVKEKKPTKDLQSPLPSVEEDSSNRDKKTDIADLHTDSKVGIADVLSPISPDAALQSDGPLKKAKEPEESSITPTTPPSFNVGESLSRRSASPLQHPRTSPDMLDKTSPCKRGLGTITTVHKKHGSVDHLPSVKRRRSIANDFHGKPDYNKRSLSIERKPEAFKTKGDRPHKVHPSFHRNSDSKLKLEPSSKEKSGSMFFNTLRTVKDKSHVHDTQRSSDVNFSRQNGTRSHSPSVSPVGFSFDKSPVTTPPLPTAPAPVITSRHALVNNQFPTNNPNILDHKANNGDDISNALNTSRSENKPNSNLVQGSVVKPSNTSASALPTSAPKKLSLSEYRQRRQQNILHQQSKDNQAHGDTARPHTVPAATVSNPSFTR</sequence>
<evidence type="ECO:0000250" key="1"/>
<evidence type="ECO:0000255" key="2">
    <source>
        <dbReference type="PROSITE-ProRule" id="PRU00190"/>
    </source>
</evidence>
<evidence type="ECO:0000256" key="3">
    <source>
        <dbReference type="SAM" id="MobiDB-lite"/>
    </source>
</evidence>
<evidence type="ECO:0000269" key="4">
    <source>
    </source>
</evidence>
<evidence type="ECO:0000269" key="5">
    <source>
    </source>
</evidence>
<evidence type="ECO:0000269" key="6">
    <source>
    </source>
</evidence>
<comment type="function">
    <text evidence="1">Transcriptional regulator that acts via the formation of large multiprotein complexes that modify and/or remodel the chromatin. Required for both gene activation and repression. Part of the Set3C complex, which is required to repress early/middle sporulation genes during meiosis. Required for the transcriptional activation of genes with high activity (By similarity).</text>
</comment>
<comment type="subcellular location">
    <subcellularLocation>
        <location evidence="4 5">Nucleus</location>
    </subcellularLocation>
</comment>
<comment type="similarity">
    <text evidence="2">Belongs to the class V-like SAM-binding methyltransferase superfamily. Histone-lysine methyltransferase family. SET3 subfamily.</text>
</comment>
<protein>
    <recommendedName>
        <fullName>SET domain-containing protein 3</fullName>
    </recommendedName>
</protein>
<reference key="1">
    <citation type="journal article" date="2002" name="Nature">
        <title>The genome sequence of Schizosaccharomyces pombe.</title>
        <authorList>
            <person name="Wood V."/>
            <person name="Gwilliam R."/>
            <person name="Rajandream M.A."/>
            <person name="Lyne M.H."/>
            <person name="Lyne R."/>
            <person name="Stewart A."/>
            <person name="Sgouros J.G."/>
            <person name="Peat N."/>
            <person name="Hayles J."/>
            <person name="Baker S.G."/>
            <person name="Basham D."/>
            <person name="Bowman S."/>
            <person name="Brooks K."/>
            <person name="Brown D."/>
            <person name="Brown S."/>
            <person name="Chillingworth T."/>
            <person name="Churcher C.M."/>
            <person name="Collins M."/>
            <person name="Connor R."/>
            <person name="Cronin A."/>
            <person name="Davis P."/>
            <person name="Feltwell T."/>
            <person name="Fraser A."/>
            <person name="Gentles S."/>
            <person name="Goble A."/>
            <person name="Hamlin N."/>
            <person name="Harris D.E."/>
            <person name="Hidalgo J."/>
            <person name="Hodgson G."/>
            <person name="Holroyd S."/>
            <person name="Hornsby T."/>
            <person name="Howarth S."/>
            <person name="Huckle E.J."/>
            <person name="Hunt S."/>
            <person name="Jagels K."/>
            <person name="James K.D."/>
            <person name="Jones L."/>
            <person name="Jones M."/>
            <person name="Leather S."/>
            <person name="McDonald S."/>
            <person name="McLean J."/>
            <person name="Mooney P."/>
            <person name="Moule S."/>
            <person name="Mungall K.L."/>
            <person name="Murphy L.D."/>
            <person name="Niblett D."/>
            <person name="Odell C."/>
            <person name="Oliver K."/>
            <person name="O'Neil S."/>
            <person name="Pearson D."/>
            <person name="Quail M.A."/>
            <person name="Rabbinowitsch E."/>
            <person name="Rutherford K.M."/>
            <person name="Rutter S."/>
            <person name="Saunders D."/>
            <person name="Seeger K."/>
            <person name="Sharp S."/>
            <person name="Skelton J."/>
            <person name="Simmonds M.N."/>
            <person name="Squares R."/>
            <person name="Squares S."/>
            <person name="Stevens K."/>
            <person name="Taylor K."/>
            <person name="Taylor R.G."/>
            <person name="Tivey A."/>
            <person name="Walsh S.V."/>
            <person name="Warren T."/>
            <person name="Whitehead S."/>
            <person name="Woodward J.R."/>
            <person name="Volckaert G."/>
            <person name="Aert R."/>
            <person name="Robben J."/>
            <person name="Grymonprez B."/>
            <person name="Weltjens I."/>
            <person name="Vanstreels E."/>
            <person name="Rieger M."/>
            <person name="Schaefer M."/>
            <person name="Mueller-Auer S."/>
            <person name="Gabel C."/>
            <person name="Fuchs M."/>
            <person name="Duesterhoeft A."/>
            <person name="Fritzc C."/>
            <person name="Holzer E."/>
            <person name="Moestl D."/>
            <person name="Hilbert H."/>
            <person name="Borzym K."/>
            <person name="Langer I."/>
            <person name="Beck A."/>
            <person name="Lehrach H."/>
            <person name="Reinhardt R."/>
            <person name="Pohl T.M."/>
            <person name="Eger P."/>
            <person name="Zimmermann W."/>
            <person name="Wedler H."/>
            <person name="Wambutt R."/>
            <person name="Purnelle B."/>
            <person name="Goffeau A."/>
            <person name="Cadieu E."/>
            <person name="Dreano S."/>
            <person name="Gloux S."/>
            <person name="Lelaure V."/>
            <person name="Mottier S."/>
            <person name="Galibert F."/>
            <person name="Aves S.J."/>
            <person name="Xiang Z."/>
            <person name="Hunt C."/>
            <person name="Moore K."/>
            <person name="Hurst S.M."/>
            <person name="Lucas M."/>
            <person name="Rochet M."/>
            <person name="Gaillardin C."/>
            <person name="Tallada V.A."/>
            <person name="Garzon A."/>
            <person name="Thode G."/>
            <person name="Daga R.R."/>
            <person name="Cruzado L."/>
            <person name="Jimenez J."/>
            <person name="Sanchez M."/>
            <person name="del Rey F."/>
            <person name="Benito J."/>
            <person name="Dominguez A."/>
            <person name="Revuelta J.L."/>
            <person name="Moreno S."/>
            <person name="Armstrong J."/>
            <person name="Forsburg S.L."/>
            <person name="Cerutti L."/>
            <person name="Lowe T."/>
            <person name="McCombie W.R."/>
            <person name="Paulsen I."/>
            <person name="Potashkin J."/>
            <person name="Shpakovski G.V."/>
            <person name="Ussery D."/>
            <person name="Barrell B.G."/>
            <person name="Nurse P."/>
        </authorList>
    </citation>
    <scope>NUCLEOTIDE SEQUENCE [LARGE SCALE GENOMIC DNA]</scope>
    <source>
        <strain>972 / ATCC 24843</strain>
    </source>
</reference>
<reference key="2">
    <citation type="journal article" date="2000" name="Genes Cells">
        <title>Large-scale screening of intracellular protein localization in living fission yeast cells by the use of a GFP-fusion genomic DNA library.</title>
        <authorList>
            <person name="Ding D.-Q."/>
            <person name="Tomita Y."/>
            <person name="Yamamoto A."/>
            <person name="Chikashige Y."/>
            <person name="Haraguchi T."/>
            <person name="Hiraoka Y."/>
        </authorList>
    </citation>
    <scope>NUCLEOTIDE SEQUENCE [LARGE SCALE GENOMIC DNA] OF 14-152</scope>
    <scope>SUBCELLULAR LOCATION</scope>
    <source>
        <strain>ATCC 38364 / 968</strain>
    </source>
</reference>
<reference key="3">
    <citation type="journal article" date="2006" name="Nat. Biotechnol.">
        <title>ORFeome cloning and global analysis of protein localization in the fission yeast Schizosaccharomyces pombe.</title>
        <authorList>
            <person name="Matsuyama A."/>
            <person name="Arai R."/>
            <person name="Yashiroda Y."/>
            <person name="Shirai A."/>
            <person name="Kamata A."/>
            <person name="Sekido S."/>
            <person name="Kobayashi Y."/>
            <person name="Hashimoto A."/>
            <person name="Hamamoto M."/>
            <person name="Hiraoka Y."/>
            <person name="Horinouchi S."/>
            <person name="Yoshida M."/>
        </authorList>
    </citation>
    <scope>SUBCELLULAR LOCATION [LARGE SCALE ANALYSIS]</scope>
</reference>
<reference key="4">
    <citation type="journal article" date="2008" name="J. Proteome Res.">
        <title>Phosphoproteome analysis of fission yeast.</title>
        <authorList>
            <person name="Wilson-Grady J.T."/>
            <person name="Villen J."/>
            <person name="Gygi S.P."/>
        </authorList>
    </citation>
    <scope>PHOSPHORYLATION [LARGE SCALE ANALYSIS] AT SER-496; SER-533; SER-575; SER-714 AND SER-716</scope>
    <scope>IDENTIFICATION BY MASS SPECTROMETRY</scope>
</reference>
<name>SET3_SCHPO</name>
<accession>Q10362</accession>
<accession>Q9USE1</accession>
<keyword id="KW-0010">Activator</keyword>
<keyword id="KW-0156">Chromatin regulator</keyword>
<keyword id="KW-0469">Meiosis</keyword>
<keyword id="KW-0479">Metal-binding</keyword>
<keyword id="KW-0539">Nucleus</keyword>
<keyword id="KW-0597">Phosphoprotein</keyword>
<keyword id="KW-1185">Reference proteome</keyword>
<keyword id="KW-0678">Repressor</keyword>
<keyword id="KW-0804">Transcription</keyword>
<keyword id="KW-0805">Transcription regulation</keyword>
<keyword id="KW-0862">Zinc</keyword>
<keyword id="KW-0863">Zinc-finger</keyword>
<feature type="chain" id="PRO_0000076313" description="SET domain-containing protein 3">
    <location>
        <begin position="1"/>
        <end position="859"/>
    </location>
</feature>
<feature type="domain" description="SET" evidence="2">
    <location>
        <begin position="210"/>
        <end position="337"/>
    </location>
</feature>
<feature type="zinc finger region" description="PHD-type">
    <location>
        <begin position="5"/>
        <end position="51"/>
    </location>
</feature>
<feature type="region of interest" description="Disordered" evidence="3">
    <location>
        <begin position="66"/>
        <end position="163"/>
    </location>
</feature>
<feature type="region of interest" description="Disordered" evidence="3">
    <location>
        <begin position="408"/>
        <end position="436"/>
    </location>
</feature>
<feature type="region of interest" description="Disordered" evidence="3">
    <location>
        <begin position="483"/>
        <end position="516"/>
    </location>
</feature>
<feature type="region of interest" description="Disordered" evidence="3">
    <location>
        <begin position="533"/>
        <end position="592"/>
    </location>
</feature>
<feature type="region of interest" description="Disordered" evidence="3">
    <location>
        <begin position="621"/>
        <end position="740"/>
    </location>
</feature>
<feature type="region of interest" description="Disordered" evidence="3">
    <location>
        <begin position="779"/>
        <end position="859"/>
    </location>
</feature>
<feature type="compositionally biased region" description="Polar residues" evidence="3">
    <location>
        <begin position="95"/>
        <end position="111"/>
    </location>
</feature>
<feature type="compositionally biased region" description="Low complexity" evidence="3">
    <location>
        <begin position="117"/>
        <end position="131"/>
    </location>
</feature>
<feature type="compositionally biased region" description="Low complexity" evidence="3">
    <location>
        <begin position="414"/>
        <end position="431"/>
    </location>
</feature>
<feature type="compositionally biased region" description="Basic and acidic residues" evidence="3">
    <location>
        <begin position="505"/>
        <end position="516"/>
    </location>
</feature>
<feature type="compositionally biased region" description="Polar residues" evidence="3">
    <location>
        <begin position="565"/>
        <end position="576"/>
    </location>
</feature>
<feature type="compositionally biased region" description="Basic and acidic residues" evidence="3">
    <location>
        <begin position="626"/>
        <end position="653"/>
    </location>
</feature>
<feature type="compositionally biased region" description="Basic and acidic residues" evidence="3">
    <location>
        <begin position="662"/>
        <end position="678"/>
    </location>
</feature>
<feature type="compositionally biased region" description="Basic and acidic residues" evidence="3">
    <location>
        <begin position="688"/>
        <end position="700"/>
    </location>
</feature>
<feature type="compositionally biased region" description="Polar residues" evidence="3">
    <location>
        <begin position="701"/>
        <end position="719"/>
    </location>
</feature>
<feature type="compositionally biased region" description="Polar residues" evidence="3">
    <location>
        <begin position="779"/>
        <end position="807"/>
    </location>
</feature>
<feature type="compositionally biased region" description="Basic and acidic residues" evidence="3">
    <location>
        <begin position="831"/>
        <end position="843"/>
    </location>
</feature>
<feature type="modified residue" description="Phosphoserine" evidence="6">
    <location>
        <position position="496"/>
    </location>
</feature>
<feature type="modified residue" description="Phosphoserine" evidence="6">
    <location>
        <position position="533"/>
    </location>
</feature>
<feature type="modified residue" description="Phosphoserine" evidence="6">
    <location>
        <position position="575"/>
    </location>
</feature>
<feature type="modified residue" description="Phosphoserine" evidence="6">
    <location>
        <position position="714"/>
    </location>
</feature>
<feature type="modified residue" description="Phosphoserine" evidence="6">
    <location>
        <position position="716"/>
    </location>
</feature>
<gene>
    <name type="primary">set3</name>
    <name type="ORF">SPAC22E12.11c</name>
</gene>
<organism>
    <name type="scientific">Schizosaccharomyces pombe (strain 972 / ATCC 24843)</name>
    <name type="common">Fission yeast</name>
    <dbReference type="NCBI Taxonomy" id="284812"/>
    <lineage>
        <taxon>Eukaryota</taxon>
        <taxon>Fungi</taxon>
        <taxon>Dikarya</taxon>
        <taxon>Ascomycota</taxon>
        <taxon>Taphrinomycotina</taxon>
        <taxon>Schizosaccharomycetes</taxon>
        <taxon>Schizosaccharomycetales</taxon>
        <taxon>Schizosaccharomycetaceae</taxon>
        <taxon>Schizosaccharomyces</taxon>
    </lineage>
</organism>
<proteinExistence type="evidence at protein level"/>
<dbReference type="EMBL" id="CU329670">
    <property type="protein sequence ID" value="CAA93898.1"/>
    <property type="molecule type" value="Genomic_DNA"/>
</dbReference>
<dbReference type="EMBL" id="AB027830">
    <property type="protein sequence ID" value="BAA87134.1"/>
    <property type="molecule type" value="Genomic_DNA"/>
</dbReference>
<dbReference type="PIR" id="T38168">
    <property type="entry name" value="T38168"/>
</dbReference>
<dbReference type="RefSeq" id="NP_594837.1">
    <property type="nucleotide sequence ID" value="NM_001020266.2"/>
</dbReference>
<dbReference type="SMR" id="Q10362"/>
<dbReference type="BioGRID" id="278389">
    <property type="interactions" value="128"/>
</dbReference>
<dbReference type="STRING" id="284812.Q10362"/>
<dbReference type="iPTMnet" id="Q10362"/>
<dbReference type="PaxDb" id="4896-SPAC22E12.11c.1"/>
<dbReference type="EnsemblFungi" id="SPAC22E12.11c.1">
    <property type="protein sequence ID" value="SPAC22E12.11c.1:pep"/>
    <property type="gene ID" value="SPAC22E12.11c"/>
</dbReference>
<dbReference type="GeneID" id="2541899"/>
<dbReference type="KEGG" id="spo:2541899"/>
<dbReference type="PomBase" id="SPAC22E12.11c">
    <property type="gene designation" value="set3"/>
</dbReference>
<dbReference type="VEuPathDB" id="FungiDB:SPAC22E12.11c"/>
<dbReference type="eggNOG" id="KOG1844">
    <property type="taxonomic scope" value="Eukaryota"/>
</dbReference>
<dbReference type="HOGENOM" id="CLU_334047_0_0_1"/>
<dbReference type="InParanoid" id="Q10362"/>
<dbReference type="OMA" id="YSTTHIA"/>
<dbReference type="PRO" id="PR:Q10362"/>
<dbReference type="Proteomes" id="UP000002485">
    <property type="component" value="Chromosome I"/>
</dbReference>
<dbReference type="GO" id="GO:0000792">
    <property type="term" value="C:heterochromatin"/>
    <property type="evidence" value="ECO:0000314"/>
    <property type="project" value="PomBase"/>
</dbReference>
<dbReference type="GO" id="GO:0005634">
    <property type="term" value="C:nucleus"/>
    <property type="evidence" value="ECO:0000314"/>
    <property type="project" value="PomBase"/>
</dbReference>
<dbReference type="GO" id="GO:0070210">
    <property type="term" value="C:Rpd3L-Expanded complex"/>
    <property type="evidence" value="ECO:0000314"/>
    <property type="project" value="PomBase"/>
</dbReference>
<dbReference type="GO" id="GO:0034967">
    <property type="term" value="C:Set3 complex"/>
    <property type="evidence" value="ECO:0000314"/>
    <property type="project" value="PomBase"/>
</dbReference>
<dbReference type="GO" id="GO:0035064">
    <property type="term" value="F:methylated histone binding"/>
    <property type="evidence" value="ECO:0000318"/>
    <property type="project" value="GO_Central"/>
</dbReference>
<dbReference type="GO" id="GO:1990841">
    <property type="term" value="F:promoter-specific chromatin binding"/>
    <property type="evidence" value="ECO:0000314"/>
    <property type="project" value="PomBase"/>
</dbReference>
<dbReference type="GO" id="GO:0008270">
    <property type="term" value="F:zinc ion binding"/>
    <property type="evidence" value="ECO:0007669"/>
    <property type="project" value="UniProtKB-KW"/>
</dbReference>
<dbReference type="GO" id="GO:0051321">
    <property type="term" value="P:meiotic cell cycle"/>
    <property type="evidence" value="ECO:0007669"/>
    <property type="project" value="UniProtKB-KW"/>
</dbReference>
<dbReference type="GO" id="GO:0045892">
    <property type="term" value="P:negative regulation of DNA-templated transcription"/>
    <property type="evidence" value="ECO:0007669"/>
    <property type="project" value="GOC"/>
</dbReference>
<dbReference type="GO" id="GO:0045814">
    <property type="term" value="P:negative regulation of gene expression, epigenetic"/>
    <property type="evidence" value="ECO:0000305"/>
    <property type="project" value="PomBase"/>
</dbReference>
<dbReference type="GO" id="GO:0006355">
    <property type="term" value="P:regulation of DNA-templated transcription"/>
    <property type="evidence" value="ECO:0000318"/>
    <property type="project" value="GO_Central"/>
</dbReference>
<dbReference type="CDD" id="cd15550">
    <property type="entry name" value="PHD_MLL5"/>
    <property type="match status" value="1"/>
</dbReference>
<dbReference type="CDD" id="cd19183">
    <property type="entry name" value="SET_SpSET3-like"/>
    <property type="match status" value="1"/>
</dbReference>
<dbReference type="Gene3D" id="2.170.270.10">
    <property type="entry name" value="SET domain"/>
    <property type="match status" value="1"/>
</dbReference>
<dbReference type="Gene3D" id="3.30.40.10">
    <property type="entry name" value="Zinc/RING finger domain, C3HC4 (zinc finger)"/>
    <property type="match status" value="1"/>
</dbReference>
<dbReference type="InterPro" id="IPR044435">
    <property type="entry name" value="Set3/4_SET"/>
</dbReference>
<dbReference type="InterPro" id="IPR001214">
    <property type="entry name" value="SET_dom"/>
</dbReference>
<dbReference type="InterPro" id="IPR046341">
    <property type="entry name" value="SET_dom_sf"/>
</dbReference>
<dbReference type="InterPro" id="IPR019786">
    <property type="entry name" value="Zinc_finger_PHD-type_CS"/>
</dbReference>
<dbReference type="InterPro" id="IPR011011">
    <property type="entry name" value="Znf_FYVE_PHD"/>
</dbReference>
<dbReference type="InterPro" id="IPR001965">
    <property type="entry name" value="Znf_PHD"/>
</dbReference>
<dbReference type="InterPro" id="IPR013083">
    <property type="entry name" value="Znf_RING/FYVE/PHD"/>
</dbReference>
<dbReference type="PANTHER" id="PTHR46462">
    <property type="entry name" value="UPSET, ISOFORM A"/>
    <property type="match status" value="1"/>
</dbReference>
<dbReference type="PANTHER" id="PTHR46462:SF3">
    <property type="entry name" value="UPSET, ISOFORM A"/>
    <property type="match status" value="1"/>
</dbReference>
<dbReference type="Pfam" id="PF20826">
    <property type="entry name" value="PHD_5"/>
    <property type="match status" value="1"/>
</dbReference>
<dbReference type="Pfam" id="PF00856">
    <property type="entry name" value="SET"/>
    <property type="match status" value="1"/>
</dbReference>
<dbReference type="SMART" id="SM00249">
    <property type="entry name" value="PHD"/>
    <property type="match status" value="1"/>
</dbReference>
<dbReference type="SMART" id="SM00317">
    <property type="entry name" value="SET"/>
    <property type="match status" value="1"/>
</dbReference>
<dbReference type="SUPFAM" id="SSF57903">
    <property type="entry name" value="FYVE/PHD zinc finger"/>
    <property type="match status" value="1"/>
</dbReference>
<dbReference type="SUPFAM" id="SSF82199">
    <property type="entry name" value="SET domain"/>
    <property type="match status" value="1"/>
</dbReference>
<dbReference type="PROSITE" id="PS50280">
    <property type="entry name" value="SET"/>
    <property type="match status" value="1"/>
</dbReference>
<dbReference type="PROSITE" id="PS01359">
    <property type="entry name" value="ZF_PHD_1"/>
    <property type="match status" value="1"/>
</dbReference>